<gene>
    <name evidence="1" type="primary">argB</name>
    <name type="ordered locus">BUsg_046</name>
</gene>
<protein>
    <recommendedName>
        <fullName evidence="1">Acetylglutamate kinase</fullName>
        <ecNumber evidence="1">2.7.2.8</ecNumber>
    </recommendedName>
    <alternativeName>
        <fullName evidence="1">N-acetyl-L-glutamate 5-phosphotransferase</fullName>
    </alternativeName>
    <alternativeName>
        <fullName evidence="1">NAG kinase</fullName>
        <shortName evidence="1">NAGK</shortName>
    </alternativeName>
</protein>
<keyword id="KW-0028">Amino-acid biosynthesis</keyword>
<keyword id="KW-0055">Arginine biosynthesis</keyword>
<keyword id="KW-0067">ATP-binding</keyword>
<keyword id="KW-0963">Cytoplasm</keyword>
<keyword id="KW-0418">Kinase</keyword>
<keyword id="KW-0547">Nucleotide-binding</keyword>
<keyword id="KW-0808">Transferase</keyword>
<evidence type="ECO:0000255" key="1">
    <source>
        <dbReference type="HAMAP-Rule" id="MF_00082"/>
    </source>
</evidence>
<comment type="function">
    <text evidence="1">Catalyzes the ATP-dependent phosphorylation of N-acetyl-L-glutamate.</text>
</comment>
<comment type="catalytic activity">
    <reaction evidence="1">
        <text>N-acetyl-L-glutamate + ATP = N-acetyl-L-glutamyl 5-phosphate + ADP</text>
        <dbReference type="Rhea" id="RHEA:14629"/>
        <dbReference type="ChEBI" id="CHEBI:30616"/>
        <dbReference type="ChEBI" id="CHEBI:44337"/>
        <dbReference type="ChEBI" id="CHEBI:57936"/>
        <dbReference type="ChEBI" id="CHEBI:456216"/>
        <dbReference type="EC" id="2.7.2.8"/>
    </reaction>
</comment>
<comment type="pathway">
    <text evidence="1">Amino-acid biosynthesis; L-arginine biosynthesis; N(2)-acetyl-L-ornithine from L-glutamate: step 2/4.</text>
</comment>
<comment type="subunit">
    <text evidence="1">Homodimer.</text>
</comment>
<comment type="subcellular location">
    <subcellularLocation>
        <location evidence="1">Cytoplasm</location>
    </subcellularLocation>
</comment>
<comment type="similarity">
    <text evidence="1">Belongs to the acetylglutamate kinase family. ArgB subfamily.</text>
</comment>
<proteinExistence type="inferred from homology"/>
<accession>P59098</accession>
<dbReference type="EC" id="2.7.2.8" evidence="1"/>
<dbReference type="EMBL" id="AE013218">
    <property type="protein sequence ID" value="AAM67617.1"/>
    <property type="molecule type" value="Genomic_DNA"/>
</dbReference>
<dbReference type="SMR" id="P59098"/>
<dbReference type="STRING" id="198804.BUsg_046"/>
<dbReference type="KEGG" id="bas:BUsg_046"/>
<dbReference type="eggNOG" id="COG0548">
    <property type="taxonomic scope" value="Bacteria"/>
</dbReference>
<dbReference type="HOGENOM" id="CLU_053680_1_1_6"/>
<dbReference type="UniPathway" id="UPA00068">
    <property type="reaction ID" value="UER00107"/>
</dbReference>
<dbReference type="Proteomes" id="UP000000416">
    <property type="component" value="Chromosome"/>
</dbReference>
<dbReference type="GO" id="GO:0005737">
    <property type="term" value="C:cytoplasm"/>
    <property type="evidence" value="ECO:0007669"/>
    <property type="project" value="UniProtKB-SubCell"/>
</dbReference>
<dbReference type="GO" id="GO:0003991">
    <property type="term" value="F:acetylglutamate kinase activity"/>
    <property type="evidence" value="ECO:0007669"/>
    <property type="project" value="UniProtKB-UniRule"/>
</dbReference>
<dbReference type="GO" id="GO:0005524">
    <property type="term" value="F:ATP binding"/>
    <property type="evidence" value="ECO:0007669"/>
    <property type="project" value="UniProtKB-UniRule"/>
</dbReference>
<dbReference type="GO" id="GO:0042450">
    <property type="term" value="P:arginine biosynthetic process via ornithine"/>
    <property type="evidence" value="ECO:0007669"/>
    <property type="project" value="UniProtKB-UniRule"/>
</dbReference>
<dbReference type="GO" id="GO:0006526">
    <property type="term" value="P:L-arginine biosynthetic process"/>
    <property type="evidence" value="ECO:0007669"/>
    <property type="project" value="UniProtKB-UniPathway"/>
</dbReference>
<dbReference type="Gene3D" id="3.40.1160.10">
    <property type="entry name" value="Acetylglutamate kinase-like"/>
    <property type="match status" value="1"/>
</dbReference>
<dbReference type="HAMAP" id="MF_00082">
    <property type="entry name" value="ArgB"/>
    <property type="match status" value="1"/>
</dbReference>
<dbReference type="InterPro" id="IPR036393">
    <property type="entry name" value="AceGlu_kinase-like_sf"/>
</dbReference>
<dbReference type="InterPro" id="IPR004662">
    <property type="entry name" value="AcgluKinase_fam"/>
</dbReference>
<dbReference type="InterPro" id="IPR037528">
    <property type="entry name" value="ArgB"/>
</dbReference>
<dbReference type="InterPro" id="IPR001048">
    <property type="entry name" value="Asp/Glu/Uridylate_kinase"/>
</dbReference>
<dbReference type="NCBIfam" id="TIGR00761">
    <property type="entry name" value="argB"/>
    <property type="match status" value="1"/>
</dbReference>
<dbReference type="PANTHER" id="PTHR23342">
    <property type="entry name" value="N-ACETYLGLUTAMATE SYNTHASE"/>
    <property type="match status" value="1"/>
</dbReference>
<dbReference type="PANTHER" id="PTHR23342:SF0">
    <property type="entry name" value="N-ACETYLGLUTAMATE SYNTHASE, MITOCHONDRIAL"/>
    <property type="match status" value="1"/>
</dbReference>
<dbReference type="Pfam" id="PF00696">
    <property type="entry name" value="AA_kinase"/>
    <property type="match status" value="1"/>
</dbReference>
<dbReference type="PIRSF" id="PIRSF000728">
    <property type="entry name" value="NAGK"/>
    <property type="match status" value="1"/>
</dbReference>
<dbReference type="SUPFAM" id="SSF53633">
    <property type="entry name" value="Carbamate kinase-like"/>
    <property type="match status" value="1"/>
</dbReference>
<name>ARGB_BUCAP</name>
<reference key="1">
    <citation type="journal article" date="2002" name="Science">
        <title>50 million years of genomic stasis in endosymbiotic bacteria.</title>
        <authorList>
            <person name="Tamas I."/>
            <person name="Klasson L."/>
            <person name="Canbaeck B."/>
            <person name="Naeslund A.K."/>
            <person name="Eriksson A.-S."/>
            <person name="Wernegreen J.J."/>
            <person name="Sandstroem J.P."/>
            <person name="Moran N.A."/>
            <person name="Andersson S.G.E."/>
        </authorList>
    </citation>
    <scope>NUCLEOTIDE SEQUENCE [LARGE SCALE GENOMIC DNA]</scope>
    <source>
        <strain>Sg</strain>
    </source>
</reference>
<feature type="chain" id="PRO_0000112599" description="Acetylglutamate kinase">
    <location>
        <begin position="1"/>
        <end position="258"/>
    </location>
</feature>
<feature type="binding site" evidence="1">
    <location>
        <begin position="44"/>
        <end position="45"/>
    </location>
    <ligand>
        <name>substrate</name>
    </ligand>
</feature>
<feature type="binding site" evidence="1">
    <location>
        <position position="66"/>
    </location>
    <ligand>
        <name>substrate</name>
    </ligand>
</feature>
<feature type="binding site" evidence="1">
    <location>
        <position position="158"/>
    </location>
    <ligand>
        <name>substrate</name>
    </ligand>
</feature>
<feature type="binding site" evidence="1">
    <location>
        <begin position="181"/>
        <end position="186"/>
    </location>
    <ligand>
        <name>ATP</name>
        <dbReference type="ChEBI" id="CHEBI:30616"/>
    </ligand>
</feature>
<feature type="binding site" evidence="1">
    <location>
        <begin position="209"/>
        <end position="211"/>
    </location>
    <ligand>
        <name>ATP</name>
        <dbReference type="ChEBI" id="CHEBI:30616"/>
    </ligand>
</feature>
<feature type="site" description="Transition state stabilizer" evidence="1">
    <location>
        <position position="8"/>
    </location>
</feature>
<feature type="site" description="Transition state stabilizer" evidence="1">
    <location>
        <position position="217"/>
    </location>
</feature>
<sequence length="258" mass="27821">MMSPLVIKLGGVLLESDNAMMRLFKALLDYQKSNKRHILIIHGGGRLIDDLMNKLSLPIEKKNGLRITQSEHINVITGALAGTANKILLSWALKYKINAVGLCLADGKSVNVEKLDQDLGHVGKAKPGSPLFLTKLCEQGILPIISSIGITDDGLLMNVNADLAATALATTLKANLILLSDISSILDGKGQRISEINYLQAKKLISQGIITNGMIVKVNAALEAARVLQRSIDIASWQNTDQLKLLFNGINIGTRVLV</sequence>
<organism>
    <name type="scientific">Buchnera aphidicola subsp. Schizaphis graminum (strain Sg)</name>
    <dbReference type="NCBI Taxonomy" id="198804"/>
    <lineage>
        <taxon>Bacteria</taxon>
        <taxon>Pseudomonadati</taxon>
        <taxon>Pseudomonadota</taxon>
        <taxon>Gammaproteobacteria</taxon>
        <taxon>Enterobacterales</taxon>
        <taxon>Erwiniaceae</taxon>
        <taxon>Buchnera</taxon>
    </lineage>
</organism>